<name>MYP2_RABIT</name>
<proteinExistence type="evidence at protein level"/>
<evidence type="ECO:0000250" key="1"/>
<evidence type="ECO:0000250" key="2">
    <source>
        <dbReference type="UniProtKB" id="P02689"/>
    </source>
</evidence>
<evidence type="ECO:0000250" key="3">
    <source>
        <dbReference type="UniProtKB" id="P02690"/>
    </source>
</evidence>
<evidence type="ECO:0000269" key="4">
    <source>
    </source>
</evidence>
<evidence type="ECO:0000305" key="5"/>
<feature type="initiator methionine" description="Removed" evidence="4">
    <location>
        <position position="1"/>
    </location>
</feature>
<feature type="chain" id="PRO_0000067390" description="Myelin P2 protein">
    <location>
        <begin position="2"/>
        <end position="132"/>
    </location>
</feature>
<feature type="binding site" evidence="3">
    <location>
        <position position="107"/>
    </location>
    <ligand>
        <name>(9Z)-octadecenoate</name>
        <dbReference type="ChEBI" id="CHEBI:30823"/>
    </ligand>
</feature>
<feature type="binding site" evidence="2">
    <location>
        <position position="107"/>
    </location>
    <ligand>
        <name>hexadecanoate</name>
        <dbReference type="ChEBI" id="CHEBI:7896"/>
    </ligand>
</feature>
<feature type="binding site" evidence="3">
    <location>
        <begin position="127"/>
        <end position="129"/>
    </location>
    <ligand>
        <name>(9Z)-octadecenoate</name>
        <dbReference type="ChEBI" id="CHEBI:30823"/>
    </ligand>
</feature>
<feature type="binding site" evidence="2">
    <location>
        <begin position="127"/>
        <end position="129"/>
    </location>
    <ligand>
        <name>hexadecanoate</name>
        <dbReference type="ChEBI" id="CHEBI:7896"/>
    </ligand>
</feature>
<feature type="modified residue" description="N-acetylserine" evidence="4">
    <location>
        <position position="2"/>
    </location>
</feature>
<feature type="sequence conflict" description="In Ref. 3; AA sequence." evidence="5" ref="3">
    <original>E</original>
    <variation>Q</variation>
    <location>
        <position position="73"/>
    </location>
</feature>
<feature type="sequence conflict" description="In Ref. 3; AA sequence." evidence="5" ref="3">
    <original>I</original>
    <variation>T</variation>
    <location>
        <position position="84"/>
    </location>
</feature>
<feature type="sequence conflict" description="In Ref. 3; AA sequence." evidence="5" ref="3">
    <original>D</original>
    <variation>N</variation>
    <location>
        <position position="99"/>
    </location>
</feature>
<gene>
    <name type="primary">PMP2</name>
</gene>
<dbReference type="EMBL" id="J03744">
    <property type="protein sequence ID" value="AAA31451.1"/>
    <property type="molecule type" value="mRNA"/>
</dbReference>
<dbReference type="PIR" id="A28081">
    <property type="entry name" value="MPRB2"/>
</dbReference>
<dbReference type="RefSeq" id="NP_001075699.1">
    <property type="nucleotide sequence ID" value="NM_001082230.1"/>
</dbReference>
<dbReference type="SMR" id="P02691"/>
<dbReference type="FunCoup" id="P02691">
    <property type="interactions" value="388"/>
</dbReference>
<dbReference type="iPTMnet" id="P02691"/>
<dbReference type="PaxDb" id="9986-ENSOCUP00000023290"/>
<dbReference type="Ensembl" id="ENSOCUT00000024328.3">
    <property type="protein sequence ID" value="ENSOCUP00000023290.1"/>
    <property type="gene ID" value="ENSOCUG00000007445.4"/>
</dbReference>
<dbReference type="GeneID" id="100009045"/>
<dbReference type="KEGG" id="ocu:100009045"/>
<dbReference type="CTD" id="5375"/>
<dbReference type="eggNOG" id="KOG4015">
    <property type="taxonomic scope" value="Eukaryota"/>
</dbReference>
<dbReference type="GeneTree" id="ENSGT00940000161845"/>
<dbReference type="HOGENOM" id="CLU_113772_0_0_1"/>
<dbReference type="InParanoid" id="P02691"/>
<dbReference type="OMA" id="LTAKCIM"/>
<dbReference type="OrthoDB" id="412780at2759"/>
<dbReference type="Proteomes" id="UP000001811">
    <property type="component" value="Chromosome 3"/>
</dbReference>
<dbReference type="Bgee" id="ENSOCUG00000007445">
    <property type="expression patterns" value="Expressed in autopod skin and 16 other cell types or tissues"/>
</dbReference>
<dbReference type="ExpressionAtlas" id="P02691">
    <property type="expression patterns" value="baseline"/>
</dbReference>
<dbReference type="GO" id="GO:0005737">
    <property type="term" value="C:cytoplasm"/>
    <property type="evidence" value="ECO:0007669"/>
    <property type="project" value="UniProtKB-SubCell"/>
</dbReference>
<dbReference type="GO" id="GO:0043209">
    <property type="term" value="C:myelin sheath"/>
    <property type="evidence" value="ECO:0007669"/>
    <property type="project" value="InterPro"/>
</dbReference>
<dbReference type="GO" id="GO:0015485">
    <property type="term" value="F:cholesterol binding"/>
    <property type="evidence" value="ECO:0000250"/>
    <property type="project" value="UniProtKB"/>
</dbReference>
<dbReference type="GO" id="GO:0005504">
    <property type="term" value="F:fatty acid binding"/>
    <property type="evidence" value="ECO:0000250"/>
    <property type="project" value="UniProtKB"/>
</dbReference>
<dbReference type="GO" id="GO:0061024">
    <property type="term" value="P:membrane organization"/>
    <property type="evidence" value="ECO:0007669"/>
    <property type="project" value="InterPro"/>
</dbReference>
<dbReference type="CDD" id="cd19469">
    <property type="entry name" value="FABP8"/>
    <property type="match status" value="1"/>
</dbReference>
<dbReference type="FunFam" id="2.40.128.20:FF:000001">
    <property type="entry name" value="Fatty acid-binding protein, adipocyte"/>
    <property type="match status" value="1"/>
</dbReference>
<dbReference type="Gene3D" id="2.40.128.20">
    <property type="match status" value="1"/>
</dbReference>
<dbReference type="InterPro" id="IPR012674">
    <property type="entry name" value="Calycin"/>
</dbReference>
<dbReference type="InterPro" id="IPR000463">
    <property type="entry name" value="Fatty_acid-bd"/>
</dbReference>
<dbReference type="InterPro" id="IPR031259">
    <property type="entry name" value="ILBP"/>
</dbReference>
<dbReference type="InterPro" id="IPR000566">
    <property type="entry name" value="Lipocln_cytosolic_FA-bd_dom"/>
</dbReference>
<dbReference type="InterPro" id="IPR031256">
    <property type="entry name" value="Myelin_P2"/>
</dbReference>
<dbReference type="PANTHER" id="PTHR11955">
    <property type="entry name" value="FATTY ACID BINDING PROTEIN"/>
    <property type="match status" value="1"/>
</dbReference>
<dbReference type="Pfam" id="PF00061">
    <property type="entry name" value="Lipocalin"/>
    <property type="match status" value="1"/>
</dbReference>
<dbReference type="PRINTS" id="PR00178">
    <property type="entry name" value="FATTYACIDBP"/>
</dbReference>
<dbReference type="SUPFAM" id="SSF50814">
    <property type="entry name" value="Lipocalins"/>
    <property type="match status" value="1"/>
</dbReference>
<dbReference type="PROSITE" id="PS00214">
    <property type="entry name" value="FABP"/>
    <property type="match status" value="1"/>
</dbReference>
<comment type="function">
    <text evidence="1">May play a role in lipid transport protein in Schwann cells. May bind cholesterol (By similarity).</text>
</comment>
<comment type="subunit">
    <text evidence="1">Monomer.</text>
</comment>
<comment type="subcellular location">
    <subcellularLocation>
        <location evidence="1">Cytoplasm</location>
    </subcellularLocation>
</comment>
<comment type="domain">
    <text evidence="1">Forms a beta-barrel structure that accommodates hydrophobic ligands in its interior.</text>
</comment>
<comment type="miscellaneous">
    <text>P2 protein and myelin basic protein together constitute a major fraction of peripheral nervous system myelin protein.</text>
</comment>
<comment type="similarity">
    <text evidence="5">Belongs to the calycin superfamily. Fatty-acid binding protein (FABP) family.</text>
</comment>
<protein>
    <recommendedName>
        <fullName>Myelin P2 protein</fullName>
    </recommendedName>
</protein>
<sequence length="132" mass="14922">MSNKFLGTWKLVSSENFDDYMKALGVGLATRKLGNLAKPNVIISKKGDIITIRTESTFKNTEISFKLGQEFEETTADNRKTKSIITLERGALNQVQKWDGKETTIKRKLVDGKMVVECKMKGVVCTRIYEKV</sequence>
<organism>
    <name type="scientific">Oryctolagus cuniculus</name>
    <name type="common">Rabbit</name>
    <dbReference type="NCBI Taxonomy" id="9986"/>
    <lineage>
        <taxon>Eukaryota</taxon>
        <taxon>Metazoa</taxon>
        <taxon>Chordata</taxon>
        <taxon>Craniata</taxon>
        <taxon>Vertebrata</taxon>
        <taxon>Euteleostomi</taxon>
        <taxon>Mammalia</taxon>
        <taxon>Eutheria</taxon>
        <taxon>Euarchontoglires</taxon>
        <taxon>Glires</taxon>
        <taxon>Lagomorpha</taxon>
        <taxon>Leporidae</taxon>
        <taxon>Oryctolagus</taxon>
    </lineage>
</organism>
<accession>P02691</accession>
<reference key="1">
    <citation type="journal article" date="1988" name="J. Biol. Chem.">
        <title>Characterization of a cloned cDNA encoding rabbit myelin P2 protein.</title>
        <authorList>
            <person name="Narayanan V."/>
            <person name="Barbosa E."/>
            <person name="Reed R."/>
            <person name="Tennekoon G."/>
        </authorList>
    </citation>
    <scope>NUCLEOTIDE SEQUENCE [MRNA]</scope>
</reference>
<reference key="2">
    <citation type="journal article" date="1980" name="J. Biol. Chem.">
        <title>The NH2-terminal region of the P2 protein from rabbit sciatic nerve myelin.</title>
        <authorList>
            <person name="Ishaque A."/>
            <person name="Hofmann T."/>
            <person name="Rhee S."/>
            <person name="Eylar E.H."/>
        </authorList>
    </citation>
    <scope>PROTEIN SEQUENCE OF 2-56</scope>
    <scope>ACETYLATION AT SER-2</scope>
</reference>
<reference key="3">
    <citation type="journal article" date="1982" name="J. Biol. Chem.">
        <title>The complete amino acid sequence of the rabbit P2 protein.</title>
        <authorList>
            <person name="Ishaque A."/>
            <person name="Hofmann T."/>
            <person name="Eylar E.H."/>
        </authorList>
    </citation>
    <scope>PROTEIN SEQUENCE OF 56-132</scope>
</reference>
<keyword id="KW-0007">Acetylation</keyword>
<keyword id="KW-0963">Cytoplasm</keyword>
<keyword id="KW-0903">Direct protein sequencing</keyword>
<keyword id="KW-0446">Lipid-binding</keyword>
<keyword id="KW-1185">Reference proteome</keyword>
<keyword id="KW-0813">Transport</keyword>